<feature type="chain" id="PRO_0000385713" description="GTPase Obg">
    <location>
        <begin position="1"/>
        <end position="428"/>
    </location>
</feature>
<feature type="domain" description="Obg" evidence="3">
    <location>
        <begin position="1"/>
        <end position="158"/>
    </location>
</feature>
<feature type="domain" description="OBG-type G" evidence="1">
    <location>
        <begin position="159"/>
        <end position="329"/>
    </location>
</feature>
<feature type="domain" description="OCT" evidence="2">
    <location>
        <begin position="350"/>
        <end position="428"/>
    </location>
</feature>
<feature type="region of interest" description="Disordered" evidence="4">
    <location>
        <begin position="117"/>
        <end position="143"/>
    </location>
</feature>
<feature type="binding site" evidence="1">
    <location>
        <begin position="165"/>
        <end position="172"/>
    </location>
    <ligand>
        <name>GTP</name>
        <dbReference type="ChEBI" id="CHEBI:37565"/>
    </ligand>
</feature>
<feature type="binding site" evidence="1">
    <location>
        <position position="172"/>
    </location>
    <ligand>
        <name>Mg(2+)</name>
        <dbReference type="ChEBI" id="CHEBI:18420"/>
    </ligand>
</feature>
<feature type="binding site" evidence="1">
    <location>
        <begin position="190"/>
        <end position="194"/>
    </location>
    <ligand>
        <name>GTP</name>
        <dbReference type="ChEBI" id="CHEBI:37565"/>
    </ligand>
</feature>
<feature type="binding site" evidence="1">
    <location>
        <position position="192"/>
    </location>
    <ligand>
        <name>Mg(2+)</name>
        <dbReference type="ChEBI" id="CHEBI:18420"/>
    </ligand>
</feature>
<feature type="binding site" evidence="1">
    <location>
        <begin position="212"/>
        <end position="215"/>
    </location>
    <ligand>
        <name>GTP</name>
        <dbReference type="ChEBI" id="CHEBI:37565"/>
    </ligand>
</feature>
<feature type="binding site" evidence="1">
    <location>
        <begin position="282"/>
        <end position="285"/>
    </location>
    <ligand>
        <name>GTP</name>
        <dbReference type="ChEBI" id="CHEBI:37565"/>
    </ligand>
</feature>
<feature type="binding site" evidence="1">
    <location>
        <begin position="310"/>
        <end position="312"/>
    </location>
    <ligand>
        <name>GTP</name>
        <dbReference type="ChEBI" id="CHEBI:37565"/>
    </ligand>
</feature>
<dbReference type="EC" id="3.6.5.-" evidence="1"/>
<dbReference type="EMBL" id="CP000560">
    <property type="protein sequence ID" value="ABS74857.1"/>
    <property type="molecule type" value="Genomic_DNA"/>
</dbReference>
<dbReference type="SMR" id="A7Z781"/>
<dbReference type="GeneID" id="93081639"/>
<dbReference type="KEGG" id="bay:RBAM_024970"/>
<dbReference type="HOGENOM" id="CLU_011747_2_1_9"/>
<dbReference type="Proteomes" id="UP000001120">
    <property type="component" value="Chromosome"/>
</dbReference>
<dbReference type="GO" id="GO:0005737">
    <property type="term" value="C:cytoplasm"/>
    <property type="evidence" value="ECO:0007669"/>
    <property type="project" value="UniProtKB-SubCell"/>
</dbReference>
<dbReference type="GO" id="GO:0005525">
    <property type="term" value="F:GTP binding"/>
    <property type="evidence" value="ECO:0007669"/>
    <property type="project" value="UniProtKB-UniRule"/>
</dbReference>
<dbReference type="GO" id="GO:0003924">
    <property type="term" value="F:GTPase activity"/>
    <property type="evidence" value="ECO:0007669"/>
    <property type="project" value="UniProtKB-UniRule"/>
</dbReference>
<dbReference type="GO" id="GO:0000287">
    <property type="term" value="F:magnesium ion binding"/>
    <property type="evidence" value="ECO:0007669"/>
    <property type="project" value="InterPro"/>
</dbReference>
<dbReference type="GO" id="GO:0042254">
    <property type="term" value="P:ribosome biogenesis"/>
    <property type="evidence" value="ECO:0007669"/>
    <property type="project" value="UniProtKB-UniRule"/>
</dbReference>
<dbReference type="CDD" id="cd01898">
    <property type="entry name" value="Obg"/>
    <property type="match status" value="1"/>
</dbReference>
<dbReference type="FunFam" id="2.70.210.12:FF:000001">
    <property type="entry name" value="GTPase Obg"/>
    <property type="match status" value="1"/>
</dbReference>
<dbReference type="FunFam" id="3.40.50.300:FF:000515">
    <property type="entry name" value="GTPase Obg"/>
    <property type="match status" value="1"/>
</dbReference>
<dbReference type="Gene3D" id="3.30.300.350">
    <property type="entry name" value="GTP-binding protein OBG, C-terminal domain"/>
    <property type="match status" value="1"/>
</dbReference>
<dbReference type="Gene3D" id="2.70.210.12">
    <property type="entry name" value="GTP1/OBG domain"/>
    <property type="match status" value="1"/>
</dbReference>
<dbReference type="Gene3D" id="3.40.50.300">
    <property type="entry name" value="P-loop containing nucleotide triphosphate hydrolases"/>
    <property type="match status" value="1"/>
</dbReference>
<dbReference type="HAMAP" id="MF_01454">
    <property type="entry name" value="GTPase_Obg"/>
    <property type="match status" value="1"/>
</dbReference>
<dbReference type="InterPro" id="IPR031167">
    <property type="entry name" value="G_OBG"/>
</dbReference>
<dbReference type="InterPro" id="IPR006073">
    <property type="entry name" value="GTP-bd"/>
</dbReference>
<dbReference type="InterPro" id="IPR014100">
    <property type="entry name" value="GTP-bd_Obg/CgtA"/>
</dbReference>
<dbReference type="InterPro" id="IPR036346">
    <property type="entry name" value="GTP-bd_prot_GTP1/OBG_C_sf"/>
</dbReference>
<dbReference type="InterPro" id="IPR006074">
    <property type="entry name" value="GTP1-OBG_CS"/>
</dbReference>
<dbReference type="InterPro" id="IPR006169">
    <property type="entry name" value="GTP1_OBG_dom"/>
</dbReference>
<dbReference type="InterPro" id="IPR036726">
    <property type="entry name" value="GTP1_OBG_dom_sf"/>
</dbReference>
<dbReference type="InterPro" id="IPR045086">
    <property type="entry name" value="OBG_GTPase"/>
</dbReference>
<dbReference type="InterPro" id="IPR015349">
    <property type="entry name" value="OCT_dom"/>
</dbReference>
<dbReference type="InterPro" id="IPR027417">
    <property type="entry name" value="P-loop_NTPase"/>
</dbReference>
<dbReference type="InterPro" id="IPR005225">
    <property type="entry name" value="Small_GTP-bd"/>
</dbReference>
<dbReference type="NCBIfam" id="TIGR02729">
    <property type="entry name" value="Obg_CgtA"/>
    <property type="match status" value="1"/>
</dbReference>
<dbReference type="NCBIfam" id="TIGR03595">
    <property type="entry name" value="Obg_CgtA_exten"/>
    <property type="match status" value="1"/>
</dbReference>
<dbReference type="NCBIfam" id="NF008954">
    <property type="entry name" value="PRK12296.1"/>
    <property type="match status" value="1"/>
</dbReference>
<dbReference type="NCBIfam" id="NF008955">
    <property type="entry name" value="PRK12297.1"/>
    <property type="match status" value="1"/>
</dbReference>
<dbReference type="NCBIfam" id="NF008956">
    <property type="entry name" value="PRK12299.1"/>
    <property type="match status" value="1"/>
</dbReference>
<dbReference type="NCBIfam" id="TIGR00231">
    <property type="entry name" value="small_GTP"/>
    <property type="match status" value="1"/>
</dbReference>
<dbReference type="PANTHER" id="PTHR11702">
    <property type="entry name" value="DEVELOPMENTALLY REGULATED GTP-BINDING PROTEIN-RELATED"/>
    <property type="match status" value="1"/>
</dbReference>
<dbReference type="PANTHER" id="PTHR11702:SF31">
    <property type="entry name" value="MITOCHONDRIAL RIBOSOME-ASSOCIATED GTPASE 2"/>
    <property type="match status" value="1"/>
</dbReference>
<dbReference type="Pfam" id="PF09269">
    <property type="entry name" value="DUF1967"/>
    <property type="match status" value="1"/>
</dbReference>
<dbReference type="Pfam" id="PF01018">
    <property type="entry name" value="GTP1_OBG"/>
    <property type="match status" value="1"/>
</dbReference>
<dbReference type="Pfam" id="PF01926">
    <property type="entry name" value="MMR_HSR1"/>
    <property type="match status" value="1"/>
</dbReference>
<dbReference type="PIRSF" id="PIRSF002401">
    <property type="entry name" value="GTP_bd_Obg/CgtA"/>
    <property type="match status" value="1"/>
</dbReference>
<dbReference type="PRINTS" id="PR00326">
    <property type="entry name" value="GTP1OBG"/>
</dbReference>
<dbReference type="SUPFAM" id="SSF102741">
    <property type="entry name" value="Obg GTP-binding protein C-terminal domain"/>
    <property type="match status" value="1"/>
</dbReference>
<dbReference type="SUPFAM" id="SSF82051">
    <property type="entry name" value="Obg GTP-binding protein N-terminal domain"/>
    <property type="match status" value="1"/>
</dbReference>
<dbReference type="SUPFAM" id="SSF52540">
    <property type="entry name" value="P-loop containing nucleoside triphosphate hydrolases"/>
    <property type="match status" value="1"/>
</dbReference>
<dbReference type="PROSITE" id="PS51710">
    <property type="entry name" value="G_OBG"/>
    <property type="match status" value="1"/>
</dbReference>
<dbReference type="PROSITE" id="PS00905">
    <property type="entry name" value="GTP1_OBG"/>
    <property type="match status" value="1"/>
</dbReference>
<dbReference type="PROSITE" id="PS51883">
    <property type="entry name" value="OBG"/>
    <property type="match status" value="1"/>
</dbReference>
<dbReference type="PROSITE" id="PS51881">
    <property type="entry name" value="OCT"/>
    <property type="match status" value="1"/>
</dbReference>
<protein>
    <recommendedName>
        <fullName evidence="1">GTPase Obg</fullName>
        <ecNumber evidence="1">3.6.5.-</ecNumber>
    </recommendedName>
    <alternativeName>
        <fullName evidence="1">GTP-binding protein Obg</fullName>
    </alternativeName>
</protein>
<organism>
    <name type="scientific">Bacillus velezensis (strain DSM 23117 / BGSC 10A6 / LMG 26770 / FZB42)</name>
    <name type="common">Bacillus amyloliquefaciens subsp. plantarum</name>
    <dbReference type="NCBI Taxonomy" id="326423"/>
    <lineage>
        <taxon>Bacteria</taxon>
        <taxon>Bacillati</taxon>
        <taxon>Bacillota</taxon>
        <taxon>Bacilli</taxon>
        <taxon>Bacillales</taxon>
        <taxon>Bacillaceae</taxon>
        <taxon>Bacillus</taxon>
        <taxon>Bacillus amyloliquefaciens group</taxon>
    </lineage>
</organism>
<keyword id="KW-0963">Cytoplasm</keyword>
<keyword id="KW-0342">GTP-binding</keyword>
<keyword id="KW-0378">Hydrolase</keyword>
<keyword id="KW-0460">Magnesium</keyword>
<keyword id="KW-0479">Metal-binding</keyword>
<keyword id="KW-0547">Nucleotide-binding</keyword>
<evidence type="ECO:0000255" key="1">
    <source>
        <dbReference type="HAMAP-Rule" id="MF_01454"/>
    </source>
</evidence>
<evidence type="ECO:0000255" key="2">
    <source>
        <dbReference type="PROSITE-ProRule" id="PRU01229"/>
    </source>
</evidence>
<evidence type="ECO:0000255" key="3">
    <source>
        <dbReference type="PROSITE-ProRule" id="PRU01231"/>
    </source>
</evidence>
<evidence type="ECO:0000256" key="4">
    <source>
        <dbReference type="SAM" id="MobiDB-lite"/>
    </source>
</evidence>
<reference key="1">
    <citation type="journal article" date="2007" name="Nat. Biotechnol.">
        <title>Comparative analysis of the complete genome sequence of the plant growth-promoting bacterium Bacillus amyloliquefaciens FZB42.</title>
        <authorList>
            <person name="Chen X.H."/>
            <person name="Koumoutsi A."/>
            <person name="Scholz R."/>
            <person name="Eisenreich A."/>
            <person name="Schneider K."/>
            <person name="Heinemeyer I."/>
            <person name="Morgenstern B."/>
            <person name="Voss B."/>
            <person name="Hess W.R."/>
            <person name="Reva O."/>
            <person name="Junge H."/>
            <person name="Voigt B."/>
            <person name="Jungblut P.R."/>
            <person name="Vater J."/>
            <person name="Suessmuth R."/>
            <person name="Liesegang H."/>
            <person name="Strittmatter A."/>
            <person name="Gottschalk G."/>
            <person name="Borriss R."/>
        </authorList>
    </citation>
    <scope>NUCLEOTIDE SEQUENCE [LARGE SCALE GENOMIC DNA]</scope>
    <source>
        <strain>DSM 23117 / BGSC 10A6 / LMG 26770 / FZB42</strain>
    </source>
</reference>
<proteinExistence type="inferred from homology"/>
<gene>
    <name evidence="1" type="primary">obg</name>
    <name type="ordered locus">RBAM_024970</name>
</gene>
<sequence length="428" mass="47662">MFVDQVKVYVKGGDGGNGMVAFRREKYVPKGGPAGGDGGNGGDVVFEVDEGLRTLMDFRYQRHFKAIRGEHGMSKNQHGRNADDMVVKVPPGTVVTDDDTKQVIADLTEHGQRAVIAKGGRGGRGNTRFATPANPAPQLSEHGEPGKERYIVLELKVLADVGLVGFPSVGKSTLLSVVSSAKPKIADYHFTTLVPNLGMVETDDGRSFVMADLPGLIEGAHEGVGLGHQFLRHIERTRVIVHVIDMSAMEGRDPYEDYVTINQELSEYNLRLTERPQIIVANKMDMPEAAENLKAFKEKLQDDHPVFPISAVTREGLRDLLFEVANQLETTPEFPLYDEEELAENRVMYTMEDEEIPFNITRDPDGAFVLSGDSLERLFKMTDFSRDESVKRFARQMRGMGVDEALRERGAKDGDIIRLLEFEFEFID</sequence>
<comment type="function">
    <text evidence="1">An essential GTPase which binds GTP, GDP and possibly (p)ppGpp with moderate affinity, with high nucleotide exchange rates and a fairly low GTP hydrolysis rate. Plays a role in control of the cell cycle, stress response, ribosome biogenesis and in those bacteria that undergo differentiation, in morphogenesis control.</text>
</comment>
<comment type="cofactor">
    <cofactor evidence="1">
        <name>Mg(2+)</name>
        <dbReference type="ChEBI" id="CHEBI:18420"/>
    </cofactor>
</comment>
<comment type="subunit">
    <text evidence="1">Monomer.</text>
</comment>
<comment type="subcellular location">
    <subcellularLocation>
        <location evidence="1">Cytoplasm</location>
    </subcellularLocation>
</comment>
<comment type="similarity">
    <text evidence="1">Belongs to the TRAFAC class OBG-HflX-like GTPase superfamily. OBG GTPase family.</text>
</comment>
<name>OBG_BACVZ</name>
<accession>A7Z781</accession>